<name>IRF1_HUMAN</name>
<protein>
    <recommendedName>
        <fullName>Interferon regulatory factor 1</fullName>
        <shortName>IRF-1</shortName>
    </recommendedName>
</protein>
<sequence length="325" mass="36502">MPITRMRMRPWLEMQINSNQIPGLIWINKEEMIFQIPWKHAAKHGWDINKDACLFRSWAIHTGRYKAGEKEPDPKTWKANFRCAMNSLPDIEEVKDQSRNKGSSAVRVYRMLPPLTKNQRKERKSKSSRDAKSKAKRKSCGDSSPDTFSDGLSSSTLPDDHSSYTVPGYMQDLEVEQALTPALSPCAVSSTLPDWHIPVEVVPDSTSDLYNFQVSPMPSTSEATTDEDEEGKLPEDIMKLLEQSEWQPTNVDGKGYLLNEPGVQPTSVYGDFSCKEEPEIDSPGGDIGLSLQRVFTDLKNMDATWLDSLLTPVRLPSIQAIPCAP</sequence>
<evidence type="ECO:0000250" key="1">
    <source>
        <dbReference type="UniProtKB" id="P15314"/>
    </source>
</evidence>
<evidence type="ECO:0000255" key="2">
    <source>
        <dbReference type="PROSITE-ProRule" id="PRU00840"/>
    </source>
</evidence>
<evidence type="ECO:0000256" key="3">
    <source>
        <dbReference type="SAM" id="MobiDB-lite"/>
    </source>
</evidence>
<evidence type="ECO:0000269" key="4">
    <source>
    </source>
</evidence>
<evidence type="ECO:0000269" key="5">
    <source>
    </source>
</evidence>
<evidence type="ECO:0000269" key="6">
    <source>
    </source>
</evidence>
<evidence type="ECO:0000269" key="7">
    <source>
    </source>
</evidence>
<evidence type="ECO:0000269" key="8">
    <source>
    </source>
</evidence>
<evidence type="ECO:0000269" key="9">
    <source>
    </source>
</evidence>
<evidence type="ECO:0000269" key="10">
    <source>
    </source>
</evidence>
<evidence type="ECO:0000269" key="11">
    <source>
    </source>
</evidence>
<evidence type="ECO:0000269" key="12">
    <source>
    </source>
</evidence>
<evidence type="ECO:0000269" key="13">
    <source>
    </source>
</evidence>
<evidence type="ECO:0000269" key="14">
    <source>
    </source>
</evidence>
<evidence type="ECO:0000269" key="15">
    <source>
    </source>
</evidence>
<evidence type="ECO:0000269" key="16">
    <source>
    </source>
</evidence>
<evidence type="ECO:0000269" key="17">
    <source>
    </source>
</evidence>
<evidence type="ECO:0000269" key="18">
    <source>
    </source>
</evidence>
<evidence type="ECO:0000269" key="19">
    <source>
    </source>
</evidence>
<evidence type="ECO:0000269" key="20">
    <source>
    </source>
</evidence>
<evidence type="ECO:0000269" key="21">
    <source>
    </source>
</evidence>
<evidence type="ECO:0000303" key="22">
    <source>
    </source>
</evidence>
<evidence type="ECO:0000303" key="23">
    <source>
    </source>
</evidence>
<evidence type="ECO:0000303" key="24">
    <source>
    </source>
</evidence>
<evidence type="ECO:0000303" key="25">
    <source>
    </source>
</evidence>
<evidence type="ECO:0000303" key="26">
    <source>
    </source>
</evidence>
<evidence type="ECO:0000305" key="27"/>
<keyword id="KW-0007">Acetylation</keyword>
<keyword id="KW-0010">Activator</keyword>
<keyword id="KW-0051">Antiviral defense</keyword>
<keyword id="KW-0963">Cytoplasm</keyword>
<keyword id="KW-0225">Disease variant</keyword>
<keyword id="KW-0238">DNA-binding</keyword>
<keyword id="KW-0391">Immunity</keyword>
<keyword id="KW-0399">Innate immunity</keyword>
<keyword id="KW-1017">Isopeptide bond</keyword>
<keyword id="KW-0539">Nucleus</keyword>
<keyword id="KW-0597">Phosphoprotein</keyword>
<keyword id="KW-1267">Proteomics identification</keyword>
<keyword id="KW-1185">Reference proteome</keyword>
<keyword id="KW-0678">Repressor</keyword>
<keyword id="KW-0804">Transcription</keyword>
<keyword id="KW-0805">Transcription regulation</keyword>
<keyword id="KW-0043">Tumor suppressor</keyword>
<keyword id="KW-0832">Ubl conjugation</keyword>
<comment type="function">
    <text evidence="6 7 8 9 10 11 12 13 14 15 16 17 18 19 22 23 24 25 26">Transcriptional regulator which displays a remarkable functional diversity in the regulation of cellular responses (PubMed:15226432, PubMed:15509808, PubMed:17516545, PubMed:17942705, PubMed:18497060, PubMed:19404407, PubMed:19851330, PubMed:22367195, PubMed:32385160). Regulates transcription of IFN and IFN-inducible genes, host response to viral and bacterial infections, regulation of many genes expressed during hematopoiesis, inflammation, immune responses and cell proliferation and differentiation, regulation of the cell cycle and induction of growth arrest and programmed cell death following DNA damage (PubMed:15226432, PubMed:15509808, PubMed:17516545, PubMed:17942705, PubMed:18497060, PubMed:19404407, PubMed:19851330, PubMed:22367195). Stimulates both innate and acquired immune responses through the activation of specific target genes and can act as a transcriptional activator and repressor regulating target genes by binding to an interferon-stimulated response element (ISRE) in their promoters (PubMed:15226432, PubMed:15509808, PubMed:17516545, PubMed:17942705, PubMed:18497060, PubMed:19404407, PubMed:19851330, PubMed:21389130, PubMed:22367195). Has an essentail role in IFNG-dependent immunity to mycobacteria (PubMed:36736301). Competes with the transcriptional repressor ZBED2 for binding to a common consensus sequence in gene promoters (PubMed:32385160). Its target genes for transcriptional activation activity include: genes involved in anti-viral response, such as IFN-alpha/beta, RIGI, TNFSF10/TRAIL, ZBP1, OAS1/2, PIAS1/GBP, EIF2AK2/PKR and RSAD2/viperin; antibacterial response, such as GBP2, GBP5 and NOS2/INOS; anti-proliferative response, such as p53/TP53, LOX and CDKN1A; apoptosis, such as BBC3/PUMA, CASP1, CASP7 and CASP8; immune response, such as IL7, IL12A/B and IL15, PTGS2/COX2 and CYBB; DNA damage responses and DNA repair, such as POLQ/POLH; MHC class I expression, such as TAP1, PSMB9/LMP2, PSME1/PA28A, PSME2/PA28B and B2M and MHC class II expression, such as CIITA; metabolic enzymes, such as ACOD1/IRG1 (PubMed:15226432, PubMed:15509808, PubMed:17516545, PubMed:17942705, PubMed:18497060, PubMed:19404407, PubMed:19851330, PubMed:22367195). Represses genes involved in anti-proliferative response, such as BIRC5/survivin, CCNB1, CCNE1, CDK1, CDK2 and CDK4 and in immune response, such as FOXP3, IL4, ANXA2 and TLR4 (PubMed:18641303, PubMed:22200613). Stimulates p53/TP53-dependent transcription through enhanced recruitment of EP300 leading to increased acetylation of p53/TP53 (PubMed:15509808, PubMed:18084608). Plays an important role in immune response directly affecting NK maturation and activity, macrophage production of IL12, Th1 development and maturation of CD8+ T-cells (PubMed:11244049, PubMed:11846971, PubMed:11846974, PubMed:16932750). Also implicated in the differentiation and maturation of dendritic cells and in the suppression of regulatory T (Treg) cells development (PubMed:11244049, PubMed:11846971, PubMed:11846974, PubMed:16932750). Acts as a tumor suppressor and plays a role not only in antagonism of tumor cell growth but also in stimulating an immune response against tumor cells (PubMed:20049431).</text>
</comment>
<comment type="activity regulation">
    <text evidence="1">Activated by MYD88.</text>
</comment>
<comment type="subunit">
    <text evidence="1 7 20">Monomer (By similarity). Homodimer (By similarity). Interacts with EP300 (PubMed:15509808). Interacts with MYD88 (By similarity). Interacts with PIAS3 (By similarity). Interacts with SPOP (PubMed:37622993).</text>
</comment>
<comment type="interaction">
    <interactant intactId="EBI-1055781">
        <id>P10914</id>
    </interactant>
    <interactant intactId="EBI-2650369">
        <id>Q14653</id>
        <label>IRF3</label>
    </interactant>
    <organismsDiffer>false</organismsDiffer>
    <experiments>5</experiments>
</comment>
<comment type="interaction">
    <interactant intactId="EBI-1055781">
        <id>P10914</id>
    </interactant>
    <interactant intactId="EBI-2007911">
        <id>Q16236</id>
        <label>NFE2L2</label>
    </interactant>
    <organismsDiffer>false</organismsDiffer>
    <experiments>3</experiments>
</comment>
<comment type="interaction">
    <interactant intactId="EBI-1055781">
        <id>P10914</id>
    </interactant>
    <interactant intactId="EBI-80140">
        <id>P63165</id>
        <label>SUMO1</label>
    </interactant>
    <organismsDiffer>false</organismsDiffer>
    <experiments>2</experiments>
</comment>
<comment type="interaction">
    <interactant intactId="EBI-1055781">
        <id>P10914</id>
    </interactant>
    <interactant intactId="EBI-866453">
        <id>P03129</id>
        <label>E7</label>
    </interactant>
    <organismsDiffer>true</organismsDiffer>
    <experiments>3</experiments>
</comment>
<comment type="subcellular location">
    <subcellularLocation>
        <location evidence="20">Nucleus</location>
    </subcellularLocation>
    <subcellularLocation>
        <location evidence="1">Cytoplasm</location>
    </subcellularLocation>
    <text evidence="1">MYD88-associated IRF1 migrates into the nucleus more efficiently than non-MYD88-associated IRF1.</text>
</comment>
<comment type="induction">
    <text evidence="6 8 9 13 14 15 17 18">Induced by HPV16 E5 (PubMed:21389130). Induced by HIV (PubMed:19404407). By interferon (IFN) (PubMed:15226432, PubMed:17516545, PubMed:17942705, PubMed:19404407, PubMed:19851330, PubMed:32385160). Induced by N-methyl-N'-nitro-N-nitrosoguanidine (PubMed:22367195).</text>
</comment>
<comment type="PTM">
    <text evidence="4">Phosphorylated by CK2 and this positively regulates its activity.</text>
</comment>
<comment type="PTM">
    <text evidence="1 9">Sumoylation represses the transcriptional activity and displays enhanced resistance to protein degradation (PubMed:17942705). Sumoylated by UBE2I/UBC9 and SUMO1 (By similarity). Inactivates the tumor suppressor activity (PubMed:17942705). Elevated levels in tumor cells (PubMed:17942705). Major site is Lys-275 (PubMed:17942705). Sumoylation is enhanced by PIAS3 (By similarity). Desumoylated by SENP1 in tumor cells and appears to compete with ubiquitination on C-terminal sites (PubMed:17942705).</text>
</comment>
<comment type="PTM">
    <text evidence="9 20">Ubiquitinated in a SPOP-depedent manner (PubMed:37622993). Appears to compete with sumoylation on C-terminal sites.</text>
</comment>
<comment type="disease" evidence="5 21">
    <disease id="DI-02971">
        <name>Gastric cancer</name>
        <acronym>GASC</acronym>
        <description>A malignant disease which starts in the stomach, can spread to the esophagus or the small intestine, and can extend through the stomach wall to nearby lymph nodes and organs. It also can metastasize to other parts of the body. The term gastric cancer or gastric carcinoma refers to adenocarcinoma of the stomach that accounts for most of all gastric malignant tumors. Two main histologic types are recognized, diffuse type and intestinal type carcinomas. Diffuse tumors are poorly differentiated infiltrating lesions, resulting in thickening of the stomach. In contrast, intestinal tumors are usually exophytic, often ulcerating, and associated with intestinal metaplasia of the stomach, most often observed in sporadic disease.</description>
        <dbReference type="MIM" id="613659"/>
    </disease>
    <text>Disease susceptibility is associated with variants affecting the gene represented in this entry.</text>
</comment>
<comment type="disease" evidence="19">
    <disease id="DI-06820">
        <name>Immunodeficiency 117</name>
        <acronym>IMD117</acronym>
        <description>An autosomal recessive immunologic disorder characterized by increased susceptibility to disseminated mycobacterial infection apparent in early childhood, after exposure to weakly virulent mycobacteria. Affected individuals develop mycobacterial disease after BCG (bacille Calmette-Guerin) vaccination. Immunologic workup shows impaired development of myeloid and lymphoid cell subsets that secrete and respond to gamma-interferon.</description>
        <dbReference type="MIM" id="620668"/>
    </disease>
    <text>The disease is caused by variants affecting the gene represented in this entry.</text>
</comment>
<comment type="miscellaneous">
    <text>Deletion or rearrangement of IRF1 are found in preleukemic myelodysplastic syndrome (MDS) and acute myelogenous leukemia (AML).</text>
</comment>
<comment type="similarity">
    <text evidence="2">Belongs to the IRF family.</text>
</comment>
<comment type="online information" name="Atlas of Genetics and Cytogenetics in Oncology and Haematology">
    <link uri="https://atlasgeneticsoncology.org/gene/40990/IRF1"/>
</comment>
<gene>
    <name type="primary">IRF1</name>
</gene>
<reference key="1">
    <citation type="journal article" date="1989" name="Nucleic Acids Res.">
        <title>Sequence of a cDNA coding for human IRF-1.</title>
        <authorList>
            <person name="Maruyama M."/>
            <person name="Fujita T."/>
            <person name="Taniguchi T."/>
        </authorList>
    </citation>
    <scope>NUCLEOTIDE SEQUENCE [MRNA]</scope>
</reference>
<reference key="2">
    <citation type="journal article" date="1988" name="Cell">
        <title>Regulated expression of a gene encoding a nuclear factor, IRF-1, that specifically binds to IFN-beta gene regulatory elements.</title>
        <authorList>
            <person name="Miyamoto M."/>
            <person name="Fujita T."/>
            <person name="Kimura Y."/>
            <person name="Maruyama M."/>
            <person name="Harada H."/>
            <person name="Sudo Y."/>
            <person name="Miyata T."/>
            <person name="Taniguchi T."/>
        </authorList>
    </citation>
    <scope>NUCLEOTIDE SEQUENCE [GENOMIC DNA]</scope>
</reference>
<reference key="3">
    <citation type="journal article" date="1992" name="DNA Cell Biol.">
        <title>Human interferon regulatory factor 1: intron-exon organization.</title>
        <authorList>
            <person name="Cha Y."/>
            <person name="Sims S.H."/>
            <person name="Romine M.F."/>
            <person name="Kaufmann M."/>
            <person name="Deisseroth A.B."/>
        </authorList>
    </citation>
    <scope>NUCLEOTIDE SEQUENCE [MRNA]</scope>
    <source>
        <tissue>Placenta</tissue>
    </source>
</reference>
<reference key="4">
    <citation type="submission" date="2003-05" db="EMBL/GenBank/DDBJ databases">
        <title>Cloning of human full-length CDSs in BD Creator(TM) system donor vector.</title>
        <authorList>
            <person name="Kalnine N."/>
            <person name="Chen X."/>
            <person name="Rolfs A."/>
            <person name="Halleck A."/>
            <person name="Hines L."/>
            <person name="Eisenstein S."/>
            <person name="Koundinya M."/>
            <person name="Raphael J."/>
            <person name="Moreira D."/>
            <person name="Kelley T."/>
            <person name="LaBaer J."/>
            <person name="Lin Y."/>
            <person name="Phelan M."/>
            <person name="Farmer A."/>
        </authorList>
    </citation>
    <scope>NUCLEOTIDE SEQUENCE [LARGE SCALE MRNA]</scope>
</reference>
<reference key="5">
    <citation type="journal article" date="2004" name="Genome Res.">
        <title>The status, quality, and expansion of the NIH full-length cDNA project: the Mammalian Gene Collection (MGC).</title>
        <authorList>
            <consortium name="The MGC Project Team"/>
        </authorList>
    </citation>
    <scope>NUCLEOTIDE SEQUENCE [LARGE SCALE MRNA]</scope>
    <source>
        <tissue>Pancreas</tissue>
    </source>
</reference>
<reference key="6">
    <citation type="journal article" date="1993" name="Science">
        <title>Deletion of IRF-1, mapping to chromosome 5q31.1, in human leukemia and preleukemic myelodysplasia.</title>
        <authorList>
            <person name="Willman C.L."/>
            <person name="Sever C.E."/>
            <person name="Pallavicini M.G."/>
            <person name="Harada H."/>
            <person name="Tanaka N."/>
            <person name="Slovak M.L."/>
            <person name="Yamamoto H."/>
            <person name="Harada K."/>
            <person name="Meeker T.C."/>
            <person name="List A.F."/>
            <person name="Taniguchi T."/>
        </authorList>
    </citation>
    <scope>INVOLVEMENT IN LEUKEMIAS</scope>
</reference>
<reference key="7">
    <citation type="journal article" date="1999" name="Mol. Cell. Biochem.">
        <title>A role for casein kinase II phosphorylation in the regulation of IRF-1 transcriptional activity.</title>
        <authorList>
            <person name="Lin R."/>
            <person name="Hiscott J."/>
        </authorList>
    </citation>
    <scope>PHOSPHORYLATION</scope>
</reference>
<reference key="8">
    <citation type="journal article" date="2001" name="Annu. Rev. Immunol.">
        <title>IRF family of transcription factors as regulators of host defense.</title>
        <authorList>
            <person name="Taniguchi T."/>
            <person name="Ogasawara K."/>
            <person name="Takaoka A."/>
            <person name="Tanaka N."/>
        </authorList>
    </citation>
    <scope>REVIEW ON FUNCTION</scope>
</reference>
<reference key="9">
    <citation type="journal article" date="2002" name="J. Interferon Cytokine Res.">
        <title>Activities of IRF-1.</title>
        <authorList>
            <person name="Kroeger A."/>
            <person name="Koester M."/>
            <person name="Schroeder K."/>
            <person name="Hauser H."/>
            <person name="Mueller P.P."/>
        </authorList>
    </citation>
    <scope>REVIEW ON FUNCTION</scope>
</reference>
<reference key="10">
    <citation type="journal article" date="2002" name="J. Interferon Cytokine Res.">
        <title>IRF-1 as a negative regulator of cell proliferation.</title>
        <authorList>
            <person name="Romeo G."/>
            <person name="Fiorucci G."/>
            <person name="Chiantore M.V."/>
            <person name="Percario Z.A."/>
            <person name="Vannucchi S."/>
            <person name="Affabris E."/>
        </authorList>
    </citation>
    <scope>REVIEW ON FUNCTION</scope>
</reference>
<reference key="11">
    <citation type="journal article" date="2004" name="Mol. Cell. Biol.">
        <title>Interferon regulatory factor 1 (IRF-1) and IRF-2 distinctively up-regulate gene expression and production of interleukin-7 in human intestinal epithelial cells.</title>
        <authorList>
            <person name="Oshima S."/>
            <person name="Nakamura T."/>
            <person name="Namiki S."/>
            <person name="Okada E."/>
            <person name="Tsuchiya K."/>
            <person name="Okamoto R."/>
            <person name="Yamazaki M."/>
            <person name="Yokota T."/>
            <person name="Aida M."/>
            <person name="Yamaguchi Y."/>
            <person name="Kanai T."/>
            <person name="Handa H."/>
            <person name="Watanabe M."/>
        </authorList>
    </citation>
    <scope>FUNCTION</scope>
    <scope>INDUCTION BY IFN</scope>
</reference>
<reference key="12">
    <citation type="journal article" date="2004" name="Mol. Cell. Biol.">
        <title>Interferon regulatory factor 1 binding to p300 stimulates DNA-dependent acetylation of p53.</title>
        <authorList>
            <person name="Dornan D."/>
            <person name="Eckert M."/>
            <person name="Wallace M."/>
            <person name="Shimizu H."/>
            <person name="Ramsay E."/>
            <person name="Hupp T.R."/>
            <person name="Ball K.L."/>
        </authorList>
    </citation>
    <scope>FUNCTION</scope>
    <scope>INTERACTION WITH EP300</scope>
</reference>
<reference key="13">
    <citation type="journal article" date="2006" name="Nat. Rev. Immunol.">
        <title>IRFs: master regulators of signalling by Toll-like receptors and cytosolic pattern-recognition receptors.</title>
        <authorList>
            <person name="Honda K."/>
            <person name="Taniguchi T."/>
        </authorList>
    </citation>
    <scope>REVIEW ON FUNCTION</scope>
</reference>
<reference key="14">
    <citation type="journal article" date="2007" name="J. Cell. Physiol.">
        <title>Central role of interferon regulatory factor-1 (IRF-1) in controlling retinoic acid inducible gene-I (RIG-I) expression.</title>
        <authorList>
            <person name="Su Z.Z."/>
            <person name="Sarkar D."/>
            <person name="Emdad L."/>
            <person name="Barral P.M."/>
            <person name="Fisher P.B."/>
        </authorList>
    </citation>
    <scope>FUNCTION</scope>
    <scope>INDUCTION BY IFN</scope>
</reference>
<reference key="15">
    <citation type="journal article" date="2007" name="Neoplasia">
        <title>RNA interference of interferon regulatory factor-1 gene expression in THP-1 cell line leads to Toll-like receptor-4 overexpression/activation as well as up-modulation of annexin-II.</title>
        <authorList>
            <person name="Maratheftis C.I."/>
            <person name="Giannouli S."/>
            <person name="Spachidou M.P."/>
            <person name="Panayotou G."/>
            <person name="Voulgarelis M."/>
        </authorList>
    </citation>
    <scope>FUNCTION</scope>
</reference>
<reference key="16">
    <citation type="journal article" date="2007" name="Proc. Natl. Acad. Sci. U.S.A.">
        <title>Elevated level of SUMOylated IRF-1 in tumor cells interferes with IRF-1-mediated apoptosis.</title>
        <authorList>
            <person name="Park J."/>
            <person name="Kim K."/>
            <person name="Lee E.-J."/>
            <person name="Seo Y.-J."/>
            <person name="Lim S.-N."/>
            <person name="Park K."/>
            <person name="Rho S.B."/>
            <person name="Lee S.-H."/>
            <person name="Lee J.-H."/>
        </authorList>
    </citation>
    <scope>SUMOYLATION AT LYS-275 AND LYS-299</scope>
    <scope>UBIQUITINATION AT LYS-275 AND LYS-299</scope>
    <scope>FUNCTION</scope>
    <scope>INDUCTION BY IFN</scope>
    <scope>MUTAGENESIS OF LYS-275 AND LYS-299</scope>
</reference>
<reference key="17">
    <citation type="journal article" date="2008" name="Adv. Exp. Med. Biol.">
        <title>IRF-1 promotes apoptosis in p53-damaged basal-type human mammary epithelial cells: a model for early basal-type mammary carcinogenesis.</title>
        <authorList>
            <person name="Bowie M.L."/>
            <person name="Ibarra C."/>
            <person name="Seewalt V.L."/>
        </authorList>
    </citation>
    <scope>FUNCTION</scope>
</reference>
<reference key="18">
    <citation type="journal article" date="2008" name="J. Immunol.">
        <title>IFN regulatory factor-1 negatively regulates CD4+ CD25+ regulatory T cell differentiation by repressing Foxp3 expression.</title>
        <authorList>
            <person name="Fragale A."/>
            <person name="Gabriele L."/>
            <person name="Stellacci E."/>
            <person name="Borghi P."/>
            <person name="Perrotti E."/>
            <person name="Ilari R."/>
            <person name="Lanciotti A."/>
            <person name="Remoli A.L."/>
            <person name="Venditti M."/>
            <person name="Belardelli F."/>
            <person name="Battistini A."/>
        </authorList>
    </citation>
    <scope>FUNCTION</scope>
</reference>
<reference key="19">
    <citation type="journal article" date="2009" name="PLoS ONE">
        <title>Type I interferons and interferon regulatory factors regulate TNF-related apoptosis-inducing ligand (TRAIL) in HIV-1-infected macrophages.</title>
        <authorList>
            <person name="Huang Y."/>
            <person name="Walstrom A."/>
            <person name="Zhang L."/>
            <person name="Zhao Y."/>
            <person name="Cui M."/>
            <person name="Ye L."/>
            <person name="Zheng J.C."/>
        </authorList>
    </citation>
    <scope>FUNCTION</scope>
    <scope>INDUCTION BY HIV AND IFN</scope>
</reference>
<reference key="20">
    <citation type="journal article" date="2010" name="Cancer Immunol. Immunother.">
        <title>Regulation of immunity and oncogenesis by the IRF transcription factor family.</title>
        <authorList>
            <person name="Savitsky D."/>
            <person name="Tamura T."/>
            <person name="Yanai H."/>
            <person name="Taniguchi T."/>
        </authorList>
    </citation>
    <scope>REVIEW ON FUNCTION</scope>
</reference>
<reference key="21">
    <citation type="journal article" date="2010" name="Cell Death Differ.">
        <title>IRF-1 transcriptionally upregulates PUMA, which mediates the mitochondrial apoptotic pathway in IRF-1-induced apoptosis in cancer cells.</title>
        <authorList>
            <person name="Gao J."/>
            <person name="Senthil M."/>
            <person name="Ren B."/>
            <person name="Yan J."/>
            <person name="Xing Q."/>
            <person name="Yu J."/>
            <person name="Zhang L."/>
            <person name="Yim J.H."/>
        </authorList>
    </citation>
    <scope>FUNCTION</scope>
    <scope>INDUCTION BY IFN</scope>
</reference>
<reference key="22">
    <citation type="journal article" date="2011" name="J. Virol.">
        <title>Human papillomavirus type 16 E5 protein induces expression of beta interferon through interferon regulatory factor 1 in human keratinocytes.</title>
        <authorList>
            <person name="Muto V."/>
            <person name="Stellacci E."/>
            <person name="Lamberti A.G."/>
            <person name="Perrotti E."/>
            <person name="Carrabba A."/>
            <person name="Matera G."/>
            <person name="Sgarbanti M."/>
            <person name="Battistini A."/>
            <person name="Liberto M.C."/>
            <person name="Foca A."/>
        </authorList>
    </citation>
    <scope>FUNCTION</scope>
    <scope>INDUCTION BY HPV16 E5</scope>
</reference>
<reference key="23">
    <citation type="journal article" date="2012" name="Cancer Lett.">
        <title>Interferon regulatory factor 1 (IRF-1) induces p21(WAF1/CIP1) dependent cell cycle arrest and p21(WAF1/CIP1) independent modulation of survivin in cancer cells.</title>
        <authorList>
            <person name="Armstrong M.J."/>
            <person name="Stang M.T."/>
            <person name="Liu Y."/>
            <person name="Gao J."/>
            <person name="Ren B."/>
            <person name="Zuckerbraun B.S."/>
            <person name="Mahidhara R.S."/>
            <person name="Xing Q."/>
            <person name="Pizzoferrato E."/>
            <person name="Yim J.H."/>
        </authorList>
    </citation>
    <scope>FUNCTION</scope>
</reference>
<reference key="24">
    <citation type="journal article" date="2012" name="J. Biol. Chem.">
        <title>Interferon regulatory factor 1 transactivates the expression of human DNA polymerase eta in response to the carcinogen N-methyl-N'-nitro-N-nitrosoguanidine.</title>
        <authorList>
            <person name="Qi H."/>
            <person name="Zhu H."/>
            <person name="Lou M."/>
            <person name="Fan Y."/>
            <person name="Liu H."/>
            <person name="Shen J."/>
            <person name="Li Z."/>
            <person name="Lv X."/>
            <person name="Shan J."/>
            <person name="Zhu L."/>
            <person name="Chin Y.E."/>
            <person name="Shao J."/>
        </authorList>
    </citation>
    <scope>FUNCTION</scope>
    <scope>INDUCTION BY N-METHYL-N'-NITRO-N-NITROSOGUANIDINE</scope>
    <scope>ACETYLATION AT LYS-78</scope>
    <scope>MUTAGENESIS OF LYS-78</scope>
</reference>
<reference key="25">
    <citation type="journal article" date="2020" name="Proc. Natl. Acad. Sci. U.S.A.">
        <title>ZBED2 is an antagonist of interferon regulatory factor 1 and modifies cell identity in pancreatic cancer.</title>
        <authorList>
            <person name="Somerville T.D.D."/>
            <person name="Xu Y."/>
            <person name="Wu X.S."/>
            <person name="Maia-Silva D."/>
            <person name="Hur S.K."/>
            <person name="de Almeida L.M.N."/>
            <person name="Preall J.B."/>
            <person name="Koo P.K."/>
            <person name="Vakoc C.R."/>
        </authorList>
    </citation>
    <scope>FUNCTION</scope>
</reference>
<reference key="26">
    <citation type="journal article" date="2023" name="Elife">
        <title>SPOP targets the immune transcription factor IRF1 for proteasomal degradation.</title>
        <authorList>
            <person name="Schwartz I."/>
            <person name="Vunjak M."/>
            <person name="Budroni V."/>
            <person name="Cantoran Garcia A."/>
            <person name="Mastrovito M."/>
            <person name="Soderholm A."/>
            <person name="Hinterndorfer M."/>
            <person name="de Almeida M."/>
            <person name="Hacker K."/>
            <person name="Wang J."/>
            <person name="Froussios K."/>
            <person name="Jude J."/>
            <person name="Decker T."/>
            <person name="Zuber J."/>
            <person name="Versteeg G.A."/>
        </authorList>
    </citation>
    <scope>FUNCTION</scope>
    <scope>SUBCELLULAR LOCATION</scope>
    <scope>INTERACTION WITH SPOP</scope>
</reference>
<reference key="27">
    <citation type="journal article" date="1998" name="Int. J. Cancer">
        <title>Functionally inactivating point mutation in the tumor-suppressor IRF-1 gene identified in human gastric cancer.</title>
        <authorList>
            <person name="Nozawa H."/>
            <person name="Oda E."/>
            <person name="Ueda S."/>
            <person name="Tamura G."/>
            <person name="Maesawa C."/>
            <person name="Muto T."/>
            <person name="Taniguchi T."/>
            <person name="Tanaka N."/>
        </authorList>
    </citation>
    <scope>VARIANT GASC LEU-8</scope>
    <scope>CHARACTERIZATION OF VARIANT GASC LEU-8</scope>
</reference>
<reference key="28">
    <citation type="journal article" date="1999" name="Biochim. Biophys. Acta">
        <title>Interferon regulatory factor 1 tryptophan 11 to arginine point mutation abolishes DNA binding.</title>
        <authorList>
            <person name="Eason D.D."/>
            <person name="Shepherd A.T."/>
            <person name="Blanck G."/>
        </authorList>
    </citation>
    <scope>VARIANT GASC ARG-11</scope>
</reference>
<reference key="29">
    <citation type="journal article" date="2023" name="Cell">
        <title>Human IRF1 governs macrophagic IFN-gamma immunity to mycobacteria.</title>
        <authorList>
            <person name="Rosain J."/>
            <person name="Neehus A.L."/>
            <person name="Manry J."/>
            <person name="Yang R."/>
            <person name="Le Pen J."/>
            <person name="Daher W."/>
            <person name="Liu Z."/>
            <person name="Chan Y.H."/>
            <person name="Tahuil N."/>
            <person name="Tuerel O."/>
            <person name="Bourgey M."/>
            <person name="Ogishi M."/>
            <person name="Doisne J.M."/>
            <person name="Izquierdo H.M."/>
            <person name="Shirasaki T."/>
            <person name="Le Voyer T."/>
            <person name="Guerin A."/>
            <person name="Bastard P."/>
            <person name="Moncada-Velez M."/>
            <person name="Han J.E."/>
            <person name="Khan T."/>
            <person name="Rapaport F."/>
            <person name="Hong S.H."/>
            <person name="Cheung A."/>
            <person name="Haake K."/>
            <person name="Mindt B.C."/>
            <person name="Perez L."/>
            <person name="Philippot Q."/>
            <person name="Lee D."/>
            <person name="Zhang P."/>
            <person name="Rinchai D."/>
            <person name="Al Ali F."/>
            <person name="Ahmad Ata M.M."/>
            <person name="Rahman M."/>
            <person name="Peel J.N."/>
            <person name="Heissel S."/>
            <person name="Molina H."/>
            <person name="Kendir-Demirkol Y."/>
            <person name="Bailey R."/>
            <person name="Zhao S."/>
            <person name="Bohlen J."/>
            <person name="Mancini M."/>
            <person name="Seeleuthner Y."/>
            <person name="Roelens M."/>
            <person name="Lorenzo L."/>
            <person name="Soudee C."/>
            <person name="Paz M.E.J."/>
            <person name="Gonzalez M.L."/>
            <person name="Jeljeli M."/>
            <person name="Soulier J."/>
            <person name="Romana S."/>
            <person name="L'Honneur A.S."/>
            <person name="Materna M."/>
            <person name="Martinez-Barricarte R."/>
            <person name="Pochon M."/>
            <person name="Oleaga-Quintas C."/>
            <person name="Michev A."/>
            <person name="Migaud M."/>
            <person name="Levy R."/>
            <person name="Alyanakian M.A."/>
            <person name="Rozenberg F."/>
            <person name="Croft C.A."/>
            <person name="Vogt G."/>
            <person name="Emile J.F."/>
            <person name="Kremer L."/>
            <person name="Ma C.S."/>
            <person name="Fritz J.H."/>
            <person name="Lemon S.M."/>
            <person name="Spaan A.N."/>
            <person name="Manel N."/>
            <person name="Abel L."/>
            <person name="MacDonald M.R."/>
            <person name="Boisson-Dupuis S."/>
            <person name="Marr N."/>
            <person name="Tangye S.G."/>
            <person name="Di Santo J.P."/>
            <person name="Zhang Q."/>
            <person name="Zhang S.Y."/>
            <person name="Rice C.M."/>
            <person name="Beziat V."/>
            <person name="Lachmann N."/>
            <person name="Langlais D."/>
            <person name="Casanova J.L."/>
            <person name="Gros P."/>
            <person name="Bustamante J."/>
        </authorList>
    </citation>
    <scope>VARIANT IMD117 129-ARG--PRO-325 DEL</scope>
    <scope>CHARACTERIZATION OF VARIANT IMD117 129-ARG--PRO-325 DEL</scope>
    <scope>INVOLVEMENT IN IMD117</scope>
    <scope>MUTAGENESIS OF ALA-67</scope>
    <scope>FUNCTION</scope>
</reference>
<accession>P10914</accession>
<accession>Q96GG7</accession>
<organism>
    <name type="scientific">Homo sapiens</name>
    <name type="common">Human</name>
    <dbReference type="NCBI Taxonomy" id="9606"/>
    <lineage>
        <taxon>Eukaryota</taxon>
        <taxon>Metazoa</taxon>
        <taxon>Chordata</taxon>
        <taxon>Craniata</taxon>
        <taxon>Vertebrata</taxon>
        <taxon>Euteleostomi</taxon>
        <taxon>Mammalia</taxon>
        <taxon>Eutheria</taxon>
        <taxon>Euarchontoglires</taxon>
        <taxon>Primates</taxon>
        <taxon>Haplorrhini</taxon>
        <taxon>Catarrhini</taxon>
        <taxon>Hominidae</taxon>
        <taxon>Homo</taxon>
    </lineage>
</organism>
<dbReference type="EMBL" id="X14454">
    <property type="protein sequence ID" value="CAA32624.1"/>
    <property type="molecule type" value="mRNA"/>
</dbReference>
<dbReference type="EMBL" id="L05072">
    <property type="protein sequence ID" value="AAA36043.1"/>
    <property type="molecule type" value="Genomic_DNA"/>
</dbReference>
<dbReference type="EMBL" id="BT019756">
    <property type="protein sequence ID" value="AAV38561.1"/>
    <property type="molecule type" value="mRNA"/>
</dbReference>
<dbReference type="EMBL" id="BC009483">
    <property type="protein sequence ID" value="AAH09483.1"/>
    <property type="molecule type" value="mRNA"/>
</dbReference>
<dbReference type="CCDS" id="CCDS4155.1"/>
<dbReference type="PIR" id="B31595">
    <property type="entry name" value="B31595"/>
</dbReference>
<dbReference type="PIR" id="I52998">
    <property type="entry name" value="I52998"/>
</dbReference>
<dbReference type="RefSeq" id="NP_002189.1">
    <property type="nucleotide sequence ID" value="NM_002198.3"/>
</dbReference>
<dbReference type="SMR" id="P10914"/>
<dbReference type="BioGRID" id="109867">
    <property type="interactions" value="68"/>
</dbReference>
<dbReference type="CORUM" id="P10914"/>
<dbReference type="DIP" id="DIP-40988N"/>
<dbReference type="FunCoup" id="P10914">
    <property type="interactions" value="2329"/>
</dbReference>
<dbReference type="IntAct" id="P10914">
    <property type="interactions" value="32"/>
</dbReference>
<dbReference type="MINT" id="P10914"/>
<dbReference type="STRING" id="9606.ENSP00000245414"/>
<dbReference type="iPTMnet" id="P10914"/>
<dbReference type="PhosphoSitePlus" id="P10914"/>
<dbReference type="BioMuta" id="IRF1"/>
<dbReference type="DMDM" id="20178295"/>
<dbReference type="jPOST" id="P10914"/>
<dbReference type="MassIVE" id="P10914"/>
<dbReference type="PaxDb" id="9606-ENSP00000245414"/>
<dbReference type="PeptideAtlas" id="P10914"/>
<dbReference type="ProteomicsDB" id="52676"/>
<dbReference type="Antibodypedia" id="3180">
    <property type="antibodies" value="483 antibodies from 37 providers"/>
</dbReference>
<dbReference type="DNASU" id="3659"/>
<dbReference type="Ensembl" id="ENST00000245414.9">
    <property type="protein sequence ID" value="ENSP00000245414.4"/>
    <property type="gene ID" value="ENSG00000125347.15"/>
</dbReference>
<dbReference type="Ensembl" id="ENST00000405885.6">
    <property type="protein sequence ID" value="ENSP00000384406.1"/>
    <property type="gene ID" value="ENSG00000125347.15"/>
</dbReference>
<dbReference type="GeneID" id="3659"/>
<dbReference type="KEGG" id="hsa:3659"/>
<dbReference type="MANE-Select" id="ENST00000245414.9">
    <property type="protein sequence ID" value="ENSP00000245414.4"/>
    <property type="RefSeq nucleotide sequence ID" value="NM_002198.3"/>
    <property type="RefSeq protein sequence ID" value="NP_002189.1"/>
</dbReference>
<dbReference type="AGR" id="HGNC:6116"/>
<dbReference type="CTD" id="3659"/>
<dbReference type="DisGeNET" id="3659"/>
<dbReference type="GeneCards" id="IRF1"/>
<dbReference type="HGNC" id="HGNC:6116">
    <property type="gene designation" value="IRF1"/>
</dbReference>
<dbReference type="HPA" id="ENSG00000125347">
    <property type="expression patterns" value="Tissue enhanced (bone)"/>
</dbReference>
<dbReference type="MalaCards" id="IRF1"/>
<dbReference type="MIM" id="147575">
    <property type="type" value="gene"/>
</dbReference>
<dbReference type="MIM" id="613659">
    <property type="type" value="phenotype"/>
</dbReference>
<dbReference type="MIM" id="620668">
    <property type="type" value="phenotype"/>
</dbReference>
<dbReference type="neXtProt" id="NX_P10914"/>
<dbReference type="OpenTargets" id="ENSG00000125347"/>
<dbReference type="Orphanet" id="686447">
    <property type="disease" value="IFNG-responsive severe mendelian susceptibility to mycobacterial diseases"/>
</dbReference>
<dbReference type="PharmGKB" id="PA29915"/>
<dbReference type="VEuPathDB" id="HostDB:ENSG00000125347"/>
<dbReference type="eggNOG" id="ENOG502QVVN">
    <property type="taxonomic scope" value="Eukaryota"/>
</dbReference>
<dbReference type="GeneTree" id="ENSGT00940000156288"/>
<dbReference type="HOGENOM" id="CLU_056386_1_0_1"/>
<dbReference type="InParanoid" id="P10914"/>
<dbReference type="OMA" id="HSGYTIH"/>
<dbReference type="OrthoDB" id="6538197at2759"/>
<dbReference type="PAN-GO" id="P10914">
    <property type="GO annotations" value="5 GO annotations based on evolutionary models"/>
</dbReference>
<dbReference type="PhylomeDB" id="P10914"/>
<dbReference type="TreeFam" id="TF328512"/>
<dbReference type="PathwayCommons" id="P10914"/>
<dbReference type="Reactome" id="R-HSA-5620971">
    <property type="pathway name" value="Pyroptosis"/>
</dbReference>
<dbReference type="Reactome" id="R-HSA-877300">
    <property type="pathway name" value="Interferon gamma signaling"/>
</dbReference>
<dbReference type="Reactome" id="R-HSA-909733">
    <property type="pathway name" value="Interferon alpha/beta signaling"/>
</dbReference>
<dbReference type="Reactome" id="R-HSA-983231">
    <property type="pathway name" value="Factors involved in megakaryocyte development and platelet production"/>
</dbReference>
<dbReference type="SignaLink" id="P10914"/>
<dbReference type="SIGNOR" id="P10914"/>
<dbReference type="BioGRID-ORCS" id="3659">
    <property type="hits" value="25 hits in 1185 CRISPR screens"/>
</dbReference>
<dbReference type="ChiTaRS" id="IRF1">
    <property type="organism name" value="human"/>
</dbReference>
<dbReference type="GeneWiki" id="IRF1"/>
<dbReference type="GenomeRNAi" id="3659"/>
<dbReference type="Pharos" id="P10914">
    <property type="development level" value="Tbio"/>
</dbReference>
<dbReference type="PRO" id="PR:P10914"/>
<dbReference type="Proteomes" id="UP000005640">
    <property type="component" value="Chromosome 5"/>
</dbReference>
<dbReference type="RNAct" id="P10914">
    <property type="molecule type" value="protein"/>
</dbReference>
<dbReference type="Bgee" id="ENSG00000125347">
    <property type="expression patterns" value="Expressed in granulocyte and 182 other cell types or tissues"/>
</dbReference>
<dbReference type="ExpressionAtlas" id="P10914">
    <property type="expression patterns" value="baseline and differential"/>
</dbReference>
<dbReference type="GO" id="GO:0000785">
    <property type="term" value="C:chromatin"/>
    <property type="evidence" value="ECO:0000314"/>
    <property type="project" value="BHF-UCL"/>
</dbReference>
<dbReference type="GO" id="GO:0005737">
    <property type="term" value="C:cytoplasm"/>
    <property type="evidence" value="ECO:0000250"/>
    <property type="project" value="UniProtKB"/>
</dbReference>
<dbReference type="GO" id="GO:0005829">
    <property type="term" value="C:cytosol"/>
    <property type="evidence" value="ECO:0000304"/>
    <property type="project" value="Reactome"/>
</dbReference>
<dbReference type="GO" id="GO:0005654">
    <property type="term" value="C:nucleoplasm"/>
    <property type="evidence" value="ECO:0000304"/>
    <property type="project" value="Reactome"/>
</dbReference>
<dbReference type="GO" id="GO:0005634">
    <property type="term" value="C:nucleus"/>
    <property type="evidence" value="ECO:0000318"/>
    <property type="project" value="GO_Central"/>
</dbReference>
<dbReference type="GO" id="GO:0003677">
    <property type="term" value="F:DNA binding"/>
    <property type="evidence" value="ECO:0000304"/>
    <property type="project" value="UniProtKB"/>
</dbReference>
<dbReference type="GO" id="GO:0001228">
    <property type="term" value="F:DNA-binding transcription activator activity, RNA polymerase II-specific"/>
    <property type="evidence" value="ECO:0000314"/>
    <property type="project" value="ARUK-UCL"/>
</dbReference>
<dbReference type="GO" id="GO:0000981">
    <property type="term" value="F:DNA-binding transcription factor activity, RNA polymerase II-specific"/>
    <property type="evidence" value="ECO:0000250"/>
    <property type="project" value="UniProtKB"/>
</dbReference>
<dbReference type="GO" id="GO:0000978">
    <property type="term" value="F:RNA polymerase II cis-regulatory region sequence-specific DNA binding"/>
    <property type="evidence" value="ECO:0000314"/>
    <property type="project" value="BHF-UCL"/>
</dbReference>
<dbReference type="GO" id="GO:0000977">
    <property type="term" value="F:RNA polymerase II transcription regulatory region sequence-specific DNA binding"/>
    <property type="evidence" value="ECO:0000314"/>
    <property type="project" value="ARUK-UCL"/>
</dbReference>
<dbReference type="GO" id="GO:0000976">
    <property type="term" value="F:transcription cis-regulatory region binding"/>
    <property type="evidence" value="ECO:0000314"/>
    <property type="project" value="UniProtKB"/>
</dbReference>
<dbReference type="GO" id="GO:0006915">
    <property type="term" value="P:apoptotic process"/>
    <property type="evidence" value="ECO:0000314"/>
    <property type="project" value="UniProtKB"/>
</dbReference>
<dbReference type="GO" id="GO:0043374">
    <property type="term" value="P:CD8-positive, alpha-beta T cell differentiation"/>
    <property type="evidence" value="ECO:0007669"/>
    <property type="project" value="Ensembl"/>
</dbReference>
<dbReference type="GO" id="GO:0035458">
    <property type="term" value="P:cellular response to interferon-beta"/>
    <property type="evidence" value="ECO:0000314"/>
    <property type="project" value="BHF-UCL"/>
</dbReference>
<dbReference type="GO" id="GO:0071260">
    <property type="term" value="P:cellular response to mechanical stimulus"/>
    <property type="evidence" value="ECO:0000270"/>
    <property type="project" value="UniProtKB"/>
</dbReference>
<dbReference type="GO" id="GO:0051607">
    <property type="term" value="P:defense response to virus"/>
    <property type="evidence" value="ECO:0000314"/>
    <property type="project" value="UniProtKB"/>
</dbReference>
<dbReference type="GO" id="GO:0002376">
    <property type="term" value="P:immune system process"/>
    <property type="evidence" value="ECO:0000318"/>
    <property type="project" value="GO_Central"/>
</dbReference>
<dbReference type="GO" id="GO:0008285">
    <property type="term" value="P:negative regulation of cell population proliferation"/>
    <property type="evidence" value="ECO:0000304"/>
    <property type="project" value="UniProtKB"/>
</dbReference>
<dbReference type="GO" id="GO:0045892">
    <property type="term" value="P:negative regulation of DNA-templated transcription"/>
    <property type="evidence" value="ECO:0000315"/>
    <property type="project" value="UniProtKB"/>
</dbReference>
<dbReference type="GO" id="GO:0045590">
    <property type="term" value="P:negative regulation of regulatory T cell differentiation"/>
    <property type="evidence" value="ECO:0000250"/>
    <property type="project" value="UniProtKB"/>
</dbReference>
<dbReference type="GO" id="GO:0045893">
    <property type="term" value="P:positive regulation of DNA-templated transcription"/>
    <property type="evidence" value="ECO:0000314"/>
    <property type="project" value="UniProtKB"/>
</dbReference>
<dbReference type="GO" id="GO:0032728">
    <property type="term" value="P:positive regulation of interferon-beta production"/>
    <property type="evidence" value="ECO:0000315"/>
    <property type="project" value="UniProtKB"/>
</dbReference>
<dbReference type="GO" id="GO:0032735">
    <property type="term" value="P:positive regulation of interleukin-12 production"/>
    <property type="evidence" value="ECO:0007669"/>
    <property type="project" value="Ensembl"/>
</dbReference>
<dbReference type="GO" id="GO:0045944">
    <property type="term" value="P:positive regulation of transcription by RNA polymerase II"/>
    <property type="evidence" value="ECO:0000315"/>
    <property type="project" value="UniProtKB"/>
</dbReference>
<dbReference type="GO" id="GO:0032481">
    <property type="term" value="P:positive regulation of type I interferon production"/>
    <property type="evidence" value="ECO:0000250"/>
    <property type="project" value="UniProtKB"/>
</dbReference>
<dbReference type="GO" id="GO:0002819">
    <property type="term" value="P:regulation of adaptive immune response"/>
    <property type="evidence" value="ECO:0000304"/>
    <property type="project" value="UniProtKB"/>
</dbReference>
<dbReference type="GO" id="GO:2000564">
    <property type="term" value="P:regulation of CD8-positive, alpha-beta T cell proliferation"/>
    <property type="evidence" value="ECO:0000250"/>
    <property type="project" value="UniProtKB"/>
</dbReference>
<dbReference type="GO" id="GO:0051726">
    <property type="term" value="P:regulation of cell cycle"/>
    <property type="evidence" value="ECO:0000314"/>
    <property type="project" value="UniProtKB"/>
</dbReference>
<dbReference type="GO" id="GO:0045088">
    <property type="term" value="P:regulation of innate immune response"/>
    <property type="evidence" value="ECO:0000304"/>
    <property type="project" value="UniProtKB"/>
</dbReference>
<dbReference type="GO" id="GO:0034124">
    <property type="term" value="P:regulation of MyD88-dependent toll-like receptor signaling pathway"/>
    <property type="evidence" value="ECO:0000250"/>
    <property type="project" value="UniProtKB"/>
</dbReference>
<dbReference type="GO" id="GO:0006357">
    <property type="term" value="P:regulation of transcription by RNA polymerase II"/>
    <property type="evidence" value="ECO:0000318"/>
    <property type="project" value="GO_Central"/>
</dbReference>
<dbReference type="GO" id="GO:0006366">
    <property type="term" value="P:transcription by RNA polymerase II"/>
    <property type="evidence" value="ECO:0007669"/>
    <property type="project" value="Ensembl"/>
</dbReference>
<dbReference type="GO" id="GO:0060333">
    <property type="term" value="P:type II interferon-mediated signaling pathway"/>
    <property type="evidence" value="ECO:0000250"/>
    <property type="project" value="UniProtKB"/>
</dbReference>
<dbReference type="CDD" id="cd00103">
    <property type="entry name" value="IRF"/>
    <property type="match status" value="1"/>
</dbReference>
<dbReference type="FunFam" id="1.10.10.10:FF:000065">
    <property type="entry name" value="Interferon regulatory factor"/>
    <property type="match status" value="1"/>
</dbReference>
<dbReference type="Gene3D" id="1.10.10.10">
    <property type="entry name" value="Winged helix-like DNA-binding domain superfamily/Winged helix DNA-binding domain"/>
    <property type="match status" value="1"/>
</dbReference>
<dbReference type="InterPro" id="IPR019817">
    <property type="entry name" value="Interferon_reg_fac_CS"/>
</dbReference>
<dbReference type="InterPro" id="IPR001346">
    <property type="entry name" value="Interferon_reg_fact_DNA-bd_dom"/>
</dbReference>
<dbReference type="InterPro" id="IPR017431">
    <property type="entry name" value="IRF1/IRF2"/>
</dbReference>
<dbReference type="InterPro" id="IPR036388">
    <property type="entry name" value="WH-like_DNA-bd_sf"/>
</dbReference>
<dbReference type="InterPro" id="IPR036390">
    <property type="entry name" value="WH_DNA-bd_sf"/>
</dbReference>
<dbReference type="PANTHER" id="PTHR11949">
    <property type="entry name" value="INTERFERON REGULATORY FACTOR"/>
    <property type="match status" value="1"/>
</dbReference>
<dbReference type="PANTHER" id="PTHR11949:SF3">
    <property type="entry name" value="INTERFERON REGULATORY FACTOR 1"/>
    <property type="match status" value="1"/>
</dbReference>
<dbReference type="Pfam" id="PF00605">
    <property type="entry name" value="IRF"/>
    <property type="match status" value="1"/>
</dbReference>
<dbReference type="PIRSF" id="PIRSF038196">
    <property type="entry name" value="IFN_RF1/2"/>
    <property type="match status" value="1"/>
</dbReference>
<dbReference type="PRINTS" id="PR00267">
    <property type="entry name" value="INTFRNREGFCT"/>
</dbReference>
<dbReference type="SMART" id="SM00348">
    <property type="entry name" value="IRF"/>
    <property type="match status" value="1"/>
</dbReference>
<dbReference type="SUPFAM" id="SSF46785">
    <property type="entry name" value="Winged helix' DNA-binding domain"/>
    <property type="match status" value="1"/>
</dbReference>
<dbReference type="PROSITE" id="PS00601">
    <property type="entry name" value="IRF_1"/>
    <property type="match status" value="1"/>
</dbReference>
<dbReference type="PROSITE" id="PS51507">
    <property type="entry name" value="IRF_2"/>
    <property type="match status" value="1"/>
</dbReference>
<proteinExistence type="evidence at protein level"/>
<feature type="chain" id="PRO_0000154545" description="Interferon regulatory factor 1">
    <location>
        <begin position="1"/>
        <end position="325"/>
    </location>
</feature>
<feature type="DNA-binding region" description="IRF tryptophan pentad repeat" evidence="2">
    <location>
        <begin position="5"/>
        <end position="113"/>
    </location>
</feature>
<feature type="region of interest" description="Disordered" evidence="3">
    <location>
        <begin position="92"/>
        <end position="165"/>
    </location>
</feature>
<feature type="compositionally biased region" description="Polar residues" evidence="3">
    <location>
        <begin position="141"/>
        <end position="157"/>
    </location>
</feature>
<feature type="modified residue" description="N6-acetyllysine" evidence="17">
    <location>
        <position position="78"/>
    </location>
</feature>
<feature type="cross-link" description="Glycyl lysine isopeptide (Lys-Gly) (interchain with G-Cter in SUMO)">
    <location>
        <position position="275"/>
    </location>
</feature>
<feature type="cross-link" description="Glycyl lysine isopeptide (Lys-Gly) (interchain with G-Cter in SUMO)">
    <location>
        <position position="299"/>
    </location>
</feature>
<feature type="sequence variant" id="VAR_065134" description="In GASC; somatic mutation; produces a protein with markedly reduced transcriptional activity but unaltered DNA-binding activity; dbSNP:rs121912469." evidence="21">
    <original>M</original>
    <variation>L</variation>
    <location>
        <position position="8"/>
    </location>
</feature>
<feature type="sequence variant" id="VAR_065135" description="In GASC; the mutation abolishes DNA binding and transactivating activities; dbSNP:rs121912470." evidence="5">
    <original>W</original>
    <variation>R</variation>
    <location>
        <position position="11"/>
    </location>
</feature>
<feature type="sequence variant" id="VAR_089208" description="In IMD117; likely pathogenic; lack of a detectable protein in homozygous patient cells; no effect on nuclear localization; no effect on DNA binding; loss of transcriptional activity." evidence="19">
    <location>
        <begin position="129"/>
        <end position="325"/>
    </location>
</feature>
<feature type="mutagenesis site" description="No effect on transcriptional activity." evidence="19">
    <original>A</original>
    <variation>P</variation>
    <location>
        <position position="67"/>
    </location>
</feature>
<feature type="mutagenesis site" description="Loss of acetylation. Partial loss of DNA-binding and transcriptional activity." evidence="17">
    <original>K</original>
    <variation>R</variation>
    <location>
        <position position="78"/>
    </location>
</feature>
<feature type="mutagenesis site" description="Some loss of sumoylation. Partial inhibition of acetylation and activity. Abolishes sumoylation, diminished ubiquitination, higher resistance to degradation, and increased apoptotic activity; when associated with R-299." evidence="9">
    <original>K</original>
    <variation>R</variation>
    <location>
        <position position="275"/>
    </location>
</feature>
<feature type="mutagenesis site" description="Large loss of sumoylation. Abolishes sumoylation, diminished ubiquitination, higher resistance to degradation, and increased apoptotic activity; when associated with R-275." evidence="9">
    <original>K</original>
    <variation>R</variation>
    <location>
        <position position="299"/>
    </location>
</feature>
<feature type="sequence conflict" description="In Ref. 1; no nucleotide entry and 2; no nucleotide entry." evidence="27" ref="1 2">
    <original>R</original>
    <variation>W</variation>
    <location>
        <position position="5"/>
    </location>
</feature>
<feature type="sequence conflict" description="In Ref. 1; no nucleotide entry and 2; no nucleotide entry." evidence="27" ref="1 2">
    <original>FQ</original>
    <variation>LE</variation>
    <location>
        <begin position="34"/>
        <end position="35"/>
    </location>
</feature>
<feature type="sequence conflict" description="In Ref. 1; no nucleotide entry and 2; no nucleotide entry." evidence="27" ref="1 2">
    <original>T</original>
    <variation>I</variation>
    <location>
        <position position="220"/>
    </location>
</feature>